<organism>
    <name type="scientific">Acinetobacter baylyi (strain ATCC 33305 / BD413 / ADP1)</name>
    <dbReference type="NCBI Taxonomy" id="62977"/>
    <lineage>
        <taxon>Bacteria</taxon>
        <taxon>Pseudomonadati</taxon>
        <taxon>Pseudomonadota</taxon>
        <taxon>Gammaproteobacteria</taxon>
        <taxon>Moraxellales</taxon>
        <taxon>Moraxellaceae</taxon>
        <taxon>Acinetobacter</taxon>
    </lineage>
</organism>
<reference key="1">
    <citation type="journal article" date="2004" name="Nucleic Acids Res.">
        <title>Unique features revealed by the genome sequence of Acinetobacter sp. ADP1, a versatile and naturally transformation competent bacterium.</title>
        <authorList>
            <person name="Barbe V."/>
            <person name="Vallenet D."/>
            <person name="Fonknechten N."/>
            <person name="Kreimeyer A."/>
            <person name="Oztas S."/>
            <person name="Labarre L."/>
            <person name="Cruveiller S."/>
            <person name="Robert C."/>
            <person name="Duprat S."/>
            <person name="Wincker P."/>
            <person name="Ornston L.N."/>
            <person name="Weissenbach J."/>
            <person name="Marliere P."/>
            <person name="Cohen G.N."/>
            <person name="Medigue C."/>
        </authorList>
    </citation>
    <scope>NUCLEOTIDE SEQUENCE [LARGE SCALE GENOMIC DNA]</scope>
    <source>
        <strain>ATCC 33305 / BD413 / ADP1</strain>
    </source>
</reference>
<sequence length="146" mass="15429">MTLRLNELAPAEGAKRDNRRLGRGIGSGVGKTGGRGVKGQKSRKSGGVRPGFEGGQTAIYRRLPKFGFTSQIALKTAEVRLSELNKVEGEIVSLETLKAANVVRRDQVRARVVLSGEVTRAFTVQGVALTKGAQAAIEAAGGKVEE</sequence>
<gene>
    <name evidence="1" type="primary">rplO</name>
    <name type="ordered locus">ACIAD3200</name>
</gene>
<accession>Q6F7T1</accession>
<dbReference type="EMBL" id="CR543861">
    <property type="protein sequence ID" value="CAG69884.1"/>
    <property type="molecule type" value="Genomic_DNA"/>
</dbReference>
<dbReference type="RefSeq" id="WP_004924144.1">
    <property type="nucleotide sequence ID" value="NC_005966.1"/>
</dbReference>
<dbReference type="SMR" id="Q6F7T1"/>
<dbReference type="STRING" id="202950.GCA_001485005_02955"/>
<dbReference type="GeneID" id="45235415"/>
<dbReference type="KEGG" id="aci:ACIAD3200"/>
<dbReference type="eggNOG" id="COG0200">
    <property type="taxonomic scope" value="Bacteria"/>
</dbReference>
<dbReference type="HOGENOM" id="CLU_055188_4_2_6"/>
<dbReference type="OrthoDB" id="9810293at2"/>
<dbReference type="BioCyc" id="ASP62977:ACIAD_RS14500-MONOMER"/>
<dbReference type="Proteomes" id="UP000000430">
    <property type="component" value="Chromosome"/>
</dbReference>
<dbReference type="GO" id="GO:0022625">
    <property type="term" value="C:cytosolic large ribosomal subunit"/>
    <property type="evidence" value="ECO:0007669"/>
    <property type="project" value="TreeGrafter"/>
</dbReference>
<dbReference type="GO" id="GO:0019843">
    <property type="term" value="F:rRNA binding"/>
    <property type="evidence" value="ECO:0007669"/>
    <property type="project" value="UniProtKB-UniRule"/>
</dbReference>
<dbReference type="GO" id="GO:0003735">
    <property type="term" value="F:structural constituent of ribosome"/>
    <property type="evidence" value="ECO:0007669"/>
    <property type="project" value="InterPro"/>
</dbReference>
<dbReference type="GO" id="GO:0006412">
    <property type="term" value="P:translation"/>
    <property type="evidence" value="ECO:0007669"/>
    <property type="project" value="UniProtKB-UniRule"/>
</dbReference>
<dbReference type="Gene3D" id="3.100.10.10">
    <property type="match status" value="1"/>
</dbReference>
<dbReference type="HAMAP" id="MF_01341">
    <property type="entry name" value="Ribosomal_uL15"/>
    <property type="match status" value="1"/>
</dbReference>
<dbReference type="InterPro" id="IPR030878">
    <property type="entry name" value="Ribosomal_uL15"/>
</dbReference>
<dbReference type="InterPro" id="IPR021131">
    <property type="entry name" value="Ribosomal_uL15/eL18"/>
</dbReference>
<dbReference type="InterPro" id="IPR036227">
    <property type="entry name" value="Ribosomal_uL15/eL18_sf"/>
</dbReference>
<dbReference type="InterPro" id="IPR005749">
    <property type="entry name" value="Ribosomal_uL15_bac-type"/>
</dbReference>
<dbReference type="InterPro" id="IPR001196">
    <property type="entry name" value="Ribosomal_uL15_CS"/>
</dbReference>
<dbReference type="NCBIfam" id="TIGR01071">
    <property type="entry name" value="rplO_bact"/>
    <property type="match status" value="1"/>
</dbReference>
<dbReference type="PANTHER" id="PTHR12934">
    <property type="entry name" value="50S RIBOSOMAL PROTEIN L15"/>
    <property type="match status" value="1"/>
</dbReference>
<dbReference type="PANTHER" id="PTHR12934:SF11">
    <property type="entry name" value="LARGE RIBOSOMAL SUBUNIT PROTEIN UL15M"/>
    <property type="match status" value="1"/>
</dbReference>
<dbReference type="Pfam" id="PF00828">
    <property type="entry name" value="Ribosomal_L27A"/>
    <property type="match status" value="1"/>
</dbReference>
<dbReference type="SUPFAM" id="SSF52080">
    <property type="entry name" value="Ribosomal proteins L15p and L18e"/>
    <property type="match status" value="1"/>
</dbReference>
<dbReference type="PROSITE" id="PS00475">
    <property type="entry name" value="RIBOSOMAL_L15"/>
    <property type="match status" value="1"/>
</dbReference>
<name>RL15_ACIAD</name>
<keyword id="KW-0687">Ribonucleoprotein</keyword>
<keyword id="KW-0689">Ribosomal protein</keyword>
<keyword id="KW-0694">RNA-binding</keyword>
<keyword id="KW-0699">rRNA-binding</keyword>
<comment type="function">
    <text evidence="1">Binds to the 23S rRNA.</text>
</comment>
<comment type="subunit">
    <text evidence="1">Part of the 50S ribosomal subunit.</text>
</comment>
<comment type="similarity">
    <text evidence="1">Belongs to the universal ribosomal protein uL15 family.</text>
</comment>
<proteinExistence type="inferred from homology"/>
<protein>
    <recommendedName>
        <fullName evidence="1">Large ribosomal subunit protein uL15</fullName>
    </recommendedName>
    <alternativeName>
        <fullName evidence="3">50S ribosomal protein L15</fullName>
    </alternativeName>
</protein>
<feature type="chain" id="PRO_0000104661" description="Large ribosomal subunit protein uL15">
    <location>
        <begin position="1"/>
        <end position="146"/>
    </location>
</feature>
<feature type="region of interest" description="Disordered" evidence="2">
    <location>
        <begin position="1"/>
        <end position="54"/>
    </location>
</feature>
<feature type="compositionally biased region" description="Gly residues" evidence="2">
    <location>
        <begin position="23"/>
        <end position="37"/>
    </location>
</feature>
<evidence type="ECO:0000255" key="1">
    <source>
        <dbReference type="HAMAP-Rule" id="MF_01341"/>
    </source>
</evidence>
<evidence type="ECO:0000256" key="2">
    <source>
        <dbReference type="SAM" id="MobiDB-lite"/>
    </source>
</evidence>
<evidence type="ECO:0000305" key="3"/>